<keyword id="KW-0004">4Fe-4S</keyword>
<keyword id="KW-0963">Cytoplasm</keyword>
<keyword id="KW-1015">Disulfide bond</keyword>
<keyword id="KW-0408">Iron</keyword>
<keyword id="KW-0411">Iron-sulfur</keyword>
<keyword id="KW-0479">Metal-binding</keyword>
<keyword id="KW-0489">Methyltransferase</keyword>
<keyword id="KW-1185">Reference proteome</keyword>
<keyword id="KW-0698">rRNA processing</keyword>
<keyword id="KW-0949">S-adenosyl-L-methionine</keyword>
<keyword id="KW-0808">Transferase</keyword>
<keyword id="KW-0819">tRNA processing</keyword>
<dbReference type="EC" id="2.1.1.192" evidence="1"/>
<dbReference type="EMBL" id="CP000140">
    <property type="protein sequence ID" value="ABR41974.1"/>
    <property type="molecule type" value="Genomic_DNA"/>
</dbReference>
<dbReference type="RefSeq" id="WP_005861566.1">
    <property type="nucleotide sequence ID" value="NZ_LR215978.1"/>
</dbReference>
<dbReference type="SMR" id="A6L8G0"/>
<dbReference type="STRING" id="435591.BDI_0185"/>
<dbReference type="PaxDb" id="435591-BDI_0185"/>
<dbReference type="KEGG" id="pdi:BDI_0185"/>
<dbReference type="eggNOG" id="COG0820">
    <property type="taxonomic scope" value="Bacteria"/>
</dbReference>
<dbReference type="HOGENOM" id="CLU_029101_0_0_10"/>
<dbReference type="BioCyc" id="PDIS435591:G1G5A-189-MONOMER"/>
<dbReference type="Proteomes" id="UP000000566">
    <property type="component" value="Chromosome"/>
</dbReference>
<dbReference type="GO" id="GO:0005737">
    <property type="term" value="C:cytoplasm"/>
    <property type="evidence" value="ECO:0007669"/>
    <property type="project" value="UniProtKB-SubCell"/>
</dbReference>
<dbReference type="GO" id="GO:0051539">
    <property type="term" value="F:4 iron, 4 sulfur cluster binding"/>
    <property type="evidence" value="ECO:0007669"/>
    <property type="project" value="UniProtKB-UniRule"/>
</dbReference>
<dbReference type="GO" id="GO:0046872">
    <property type="term" value="F:metal ion binding"/>
    <property type="evidence" value="ECO:0007669"/>
    <property type="project" value="UniProtKB-KW"/>
</dbReference>
<dbReference type="GO" id="GO:0070040">
    <property type="term" value="F:rRNA (adenine(2503)-C2-)-methyltransferase activity"/>
    <property type="evidence" value="ECO:0007669"/>
    <property type="project" value="UniProtKB-UniRule"/>
</dbReference>
<dbReference type="GO" id="GO:0019843">
    <property type="term" value="F:rRNA binding"/>
    <property type="evidence" value="ECO:0007669"/>
    <property type="project" value="UniProtKB-UniRule"/>
</dbReference>
<dbReference type="GO" id="GO:0002935">
    <property type="term" value="F:tRNA (adenine(37)-C2)-methyltransferase activity"/>
    <property type="evidence" value="ECO:0007669"/>
    <property type="project" value="UniProtKB-UniRule"/>
</dbReference>
<dbReference type="GO" id="GO:0000049">
    <property type="term" value="F:tRNA binding"/>
    <property type="evidence" value="ECO:0007669"/>
    <property type="project" value="UniProtKB-UniRule"/>
</dbReference>
<dbReference type="GO" id="GO:0070475">
    <property type="term" value="P:rRNA base methylation"/>
    <property type="evidence" value="ECO:0007669"/>
    <property type="project" value="UniProtKB-UniRule"/>
</dbReference>
<dbReference type="GO" id="GO:0030488">
    <property type="term" value="P:tRNA methylation"/>
    <property type="evidence" value="ECO:0007669"/>
    <property type="project" value="UniProtKB-UniRule"/>
</dbReference>
<dbReference type="CDD" id="cd01335">
    <property type="entry name" value="Radical_SAM"/>
    <property type="match status" value="1"/>
</dbReference>
<dbReference type="FunFam" id="3.20.20.70:FF:000014">
    <property type="entry name" value="Probable dual-specificity RNA methyltransferase RlmN"/>
    <property type="match status" value="1"/>
</dbReference>
<dbReference type="Gene3D" id="1.10.150.530">
    <property type="match status" value="1"/>
</dbReference>
<dbReference type="Gene3D" id="3.20.20.70">
    <property type="entry name" value="Aldolase class I"/>
    <property type="match status" value="1"/>
</dbReference>
<dbReference type="HAMAP" id="MF_01849">
    <property type="entry name" value="RNA_methyltr_RlmN"/>
    <property type="match status" value="1"/>
</dbReference>
<dbReference type="InterPro" id="IPR013785">
    <property type="entry name" value="Aldolase_TIM"/>
</dbReference>
<dbReference type="InterPro" id="IPR040072">
    <property type="entry name" value="Methyltransferase_A"/>
</dbReference>
<dbReference type="InterPro" id="IPR048641">
    <property type="entry name" value="RlmN_N"/>
</dbReference>
<dbReference type="InterPro" id="IPR027492">
    <property type="entry name" value="RNA_MTrfase_RlmN"/>
</dbReference>
<dbReference type="InterPro" id="IPR004383">
    <property type="entry name" value="rRNA_lsu_MTrfase_RlmN/Cfr"/>
</dbReference>
<dbReference type="InterPro" id="IPR007197">
    <property type="entry name" value="rSAM"/>
</dbReference>
<dbReference type="NCBIfam" id="TIGR00048">
    <property type="entry name" value="rRNA_mod_RlmN"/>
    <property type="match status" value="1"/>
</dbReference>
<dbReference type="PANTHER" id="PTHR30544">
    <property type="entry name" value="23S RRNA METHYLTRANSFERASE"/>
    <property type="match status" value="1"/>
</dbReference>
<dbReference type="PANTHER" id="PTHR30544:SF5">
    <property type="entry name" value="RADICAL SAM CORE DOMAIN-CONTAINING PROTEIN"/>
    <property type="match status" value="1"/>
</dbReference>
<dbReference type="Pfam" id="PF04055">
    <property type="entry name" value="Radical_SAM"/>
    <property type="match status" value="1"/>
</dbReference>
<dbReference type="Pfam" id="PF21016">
    <property type="entry name" value="RlmN_N"/>
    <property type="match status" value="1"/>
</dbReference>
<dbReference type="PIRSF" id="PIRSF006004">
    <property type="entry name" value="CHP00048"/>
    <property type="match status" value="1"/>
</dbReference>
<dbReference type="SFLD" id="SFLDF00275">
    <property type="entry name" value="adenosine_C2_methyltransferase"/>
    <property type="match status" value="1"/>
</dbReference>
<dbReference type="SFLD" id="SFLDS00029">
    <property type="entry name" value="Radical_SAM"/>
    <property type="match status" value="1"/>
</dbReference>
<dbReference type="SUPFAM" id="SSF102114">
    <property type="entry name" value="Radical SAM enzymes"/>
    <property type="match status" value="1"/>
</dbReference>
<dbReference type="PROSITE" id="PS51918">
    <property type="entry name" value="RADICAL_SAM"/>
    <property type="match status" value="1"/>
</dbReference>
<feature type="chain" id="PRO_0000350297" description="Probable dual-specificity RNA methyltransferase RlmN">
    <location>
        <begin position="1"/>
        <end position="343"/>
    </location>
</feature>
<feature type="domain" description="Radical SAM core" evidence="2">
    <location>
        <begin position="99"/>
        <end position="320"/>
    </location>
</feature>
<feature type="active site" description="Proton acceptor" evidence="1">
    <location>
        <position position="93"/>
    </location>
</feature>
<feature type="active site" description="S-methylcysteine intermediate" evidence="1">
    <location>
        <position position="331"/>
    </location>
</feature>
<feature type="binding site" evidence="1">
    <location>
        <position position="113"/>
    </location>
    <ligand>
        <name>[4Fe-4S] cluster</name>
        <dbReference type="ChEBI" id="CHEBI:49883"/>
        <note>4Fe-4S-S-AdoMet</note>
    </ligand>
</feature>
<feature type="binding site" evidence="1">
    <location>
        <position position="117"/>
    </location>
    <ligand>
        <name>[4Fe-4S] cluster</name>
        <dbReference type="ChEBI" id="CHEBI:49883"/>
        <note>4Fe-4S-S-AdoMet</note>
    </ligand>
</feature>
<feature type="binding site" evidence="1">
    <location>
        <position position="120"/>
    </location>
    <ligand>
        <name>[4Fe-4S] cluster</name>
        <dbReference type="ChEBI" id="CHEBI:49883"/>
        <note>4Fe-4S-S-AdoMet</note>
    </ligand>
</feature>
<feature type="binding site" evidence="1">
    <location>
        <begin position="158"/>
        <end position="159"/>
    </location>
    <ligand>
        <name>S-adenosyl-L-methionine</name>
        <dbReference type="ChEBI" id="CHEBI:59789"/>
    </ligand>
</feature>
<feature type="binding site" evidence="1">
    <location>
        <position position="190"/>
    </location>
    <ligand>
        <name>S-adenosyl-L-methionine</name>
        <dbReference type="ChEBI" id="CHEBI:59789"/>
    </ligand>
</feature>
<feature type="binding site" evidence="1">
    <location>
        <begin position="212"/>
        <end position="214"/>
    </location>
    <ligand>
        <name>S-adenosyl-L-methionine</name>
        <dbReference type="ChEBI" id="CHEBI:59789"/>
    </ligand>
</feature>
<feature type="binding site" evidence="1">
    <location>
        <position position="288"/>
    </location>
    <ligand>
        <name>S-adenosyl-L-methionine</name>
        <dbReference type="ChEBI" id="CHEBI:59789"/>
    </ligand>
</feature>
<feature type="disulfide bond" description="(transient)" evidence="1">
    <location>
        <begin position="106"/>
        <end position="331"/>
    </location>
</feature>
<sequence>MVDKRQLLGMTLEELKGVASEVGLPAYAAKQMADWIYKKKITRISEMTNIAVAKRALLEDSFEIGAYPPSEYQKSKDGTIKYLYAAGPGRFVESVYIPTDDRATLCVSSQVGCKMNCLFCMTGKQGFTANLTANQILNQIQSLPENDSLTNIVFMGMGEPLDNVDELFKVLEILTAPYGYAWSPKRITVSTIGVTKGLKRFLEESECHLAVSLHSPYPMERLSLMPVEKAFPAREVIDLIKQYDFSHQRRVSFEYIVFKNLNDSLKHAEALSCLLGGIPCRVNLIRFHAIPNVSLETSDIAKMEAFRDFLNAKGVVCTIRASRGEDIFAACGMLSTAKNVTFV</sequence>
<accession>A6L8G0</accession>
<evidence type="ECO:0000255" key="1">
    <source>
        <dbReference type="HAMAP-Rule" id="MF_01849"/>
    </source>
</evidence>
<evidence type="ECO:0000255" key="2">
    <source>
        <dbReference type="PROSITE-ProRule" id="PRU01266"/>
    </source>
</evidence>
<reference key="1">
    <citation type="journal article" date="2007" name="PLoS Biol.">
        <title>Evolution of symbiotic bacteria in the distal human intestine.</title>
        <authorList>
            <person name="Xu J."/>
            <person name="Mahowald M.A."/>
            <person name="Ley R.E."/>
            <person name="Lozupone C.A."/>
            <person name="Hamady M."/>
            <person name="Martens E.C."/>
            <person name="Henrissat B."/>
            <person name="Coutinho P.M."/>
            <person name="Minx P."/>
            <person name="Latreille P."/>
            <person name="Cordum H."/>
            <person name="Van Brunt A."/>
            <person name="Kim K."/>
            <person name="Fulton R.S."/>
            <person name="Fulton L.A."/>
            <person name="Clifton S.W."/>
            <person name="Wilson R.K."/>
            <person name="Knight R.D."/>
            <person name="Gordon J.I."/>
        </authorList>
    </citation>
    <scope>NUCLEOTIDE SEQUENCE [LARGE SCALE GENOMIC DNA]</scope>
    <source>
        <strain>ATCC 8503 / DSM 20701 / CIP 104284 / JCM 5825 / NCTC 11152</strain>
    </source>
</reference>
<organism>
    <name type="scientific">Parabacteroides distasonis (strain ATCC 8503 / DSM 20701 / CIP 104284 / JCM 5825 / NCTC 11152)</name>
    <dbReference type="NCBI Taxonomy" id="435591"/>
    <lineage>
        <taxon>Bacteria</taxon>
        <taxon>Pseudomonadati</taxon>
        <taxon>Bacteroidota</taxon>
        <taxon>Bacteroidia</taxon>
        <taxon>Bacteroidales</taxon>
        <taxon>Tannerellaceae</taxon>
        <taxon>Parabacteroides</taxon>
    </lineage>
</organism>
<proteinExistence type="inferred from homology"/>
<name>RLMN_PARD8</name>
<comment type="function">
    <text evidence="1">Specifically methylates position 2 of adenine 2503 in 23S rRNA and position 2 of adenine 37 in tRNAs.</text>
</comment>
<comment type="catalytic activity">
    <reaction evidence="1">
        <text>adenosine(2503) in 23S rRNA + 2 reduced [2Fe-2S]-[ferredoxin] + 2 S-adenosyl-L-methionine = 2-methyladenosine(2503) in 23S rRNA + 5'-deoxyadenosine + L-methionine + 2 oxidized [2Fe-2S]-[ferredoxin] + S-adenosyl-L-homocysteine</text>
        <dbReference type="Rhea" id="RHEA:42916"/>
        <dbReference type="Rhea" id="RHEA-COMP:10000"/>
        <dbReference type="Rhea" id="RHEA-COMP:10001"/>
        <dbReference type="Rhea" id="RHEA-COMP:10152"/>
        <dbReference type="Rhea" id="RHEA-COMP:10282"/>
        <dbReference type="ChEBI" id="CHEBI:17319"/>
        <dbReference type="ChEBI" id="CHEBI:33737"/>
        <dbReference type="ChEBI" id="CHEBI:33738"/>
        <dbReference type="ChEBI" id="CHEBI:57844"/>
        <dbReference type="ChEBI" id="CHEBI:57856"/>
        <dbReference type="ChEBI" id="CHEBI:59789"/>
        <dbReference type="ChEBI" id="CHEBI:74411"/>
        <dbReference type="ChEBI" id="CHEBI:74497"/>
        <dbReference type="EC" id="2.1.1.192"/>
    </reaction>
</comment>
<comment type="catalytic activity">
    <reaction evidence="1">
        <text>adenosine(37) in tRNA + 2 reduced [2Fe-2S]-[ferredoxin] + 2 S-adenosyl-L-methionine = 2-methyladenosine(37) in tRNA + 5'-deoxyadenosine + L-methionine + 2 oxidized [2Fe-2S]-[ferredoxin] + S-adenosyl-L-homocysteine</text>
        <dbReference type="Rhea" id="RHEA:43332"/>
        <dbReference type="Rhea" id="RHEA-COMP:10000"/>
        <dbReference type="Rhea" id="RHEA-COMP:10001"/>
        <dbReference type="Rhea" id="RHEA-COMP:10162"/>
        <dbReference type="Rhea" id="RHEA-COMP:10485"/>
        <dbReference type="ChEBI" id="CHEBI:17319"/>
        <dbReference type="ChEBI" id="CHEBI:33737"/>
        <dbReference type="ChEBI" id="CHEBI:33738"/>
        <dbReference type="ChEBI" id="CHEBI:57844"/>
        <dbReference type="ChEBI" id="CHEBI:57856"/>
        <dbReference type="ChEBI" id="CHEBI:59789"/>
        <dbReference type="ChEBI" id="CHEBI:74411"/>
        <dbReference type="ChEBI" id="CHEBI:74497"/>
        <dbReference type="EC" id="2.1.1.192"/>
    </reaction>
</comment>
<comment type="cofactor">
    <cofactor evidence="1">
        <name>[4Fe-4S] cluster</name>
        <dbReference type="ChEBI" id="CHEBI:49883"/>
    </cofactor>
    <text evidence="1">Binds 1 [4Fe-4S] cluster. The cluster is coordinated with 3 cysteines and an exchangeable S-adenosyl-L-methionine.</text>
</comment>
<comment type="subcellular location">
    <subcellularLocation>
        <location evidence="1">Cytoplasm</location>
    </subcellularLocation>
</comment>
<comment type="miscellaneous">
    <text evidence="1">Reaction proceeds by a ping-pong mechanism involving intermediate methylation of a conserved cysteine residue.</text>
</comment>
<comment type="similarity">
    <text evidence="1">Belongs to the radical SAM superfamily. RlmN family.</text>
</comment>
<protein>
    <recommendedName>
        <fullName evidence="1">Probable dual-specificity RNA methyltransferase RlmN</fullName>
        <ecNumber evidence="1">2.1.1.192</ecNumber>
    </recommendedName>
    <alternativeName>
        <fullName evidence="1">23S rRNA (adenine(2503)-C(2))-methyltransferase</fullName>
    </alternativeName>
    <alternativeName>
        <fullName evidence="1">23S rRNA m2A2503 methyltransferase</fullName>
    </alternativeName>
    <alternativeName>
        <fullName evidence="1">Ribosomal RNA large subunit methyltransferase N</fullName>
    </alternativeName>
    <alternativeName>
        <fullName evidence="1">tRNA (adenine(37)-C(2))-methyltransferase</fullName>
    </alternativeName>
    <alternativeName>
        <fullName evidence="1">tRNA m2A37 methyltransferase</fullName>
    </alternativeName>
</protein>
<gene>
    <name evidence="1" type="primary">rlmN</name>
    <name type="ordered locus">BDI_0185</name>
</gene>